<accession>P0ABI6</accession>
<accession>P27841</accession>
<protein>
    <recommendedName>
        <fullName>Magnesium transport protein CorA</fullName>
    </recommendedName>
</protein>
<organism>
    <name type="scientific">Escherichia coli O157:H7</name>
    <dbReference type="NCBI Taxonomy" id="83334"/>
    <lineage>
        <taxon>Bacteria</taxon>
        <taxon>Pseudomonadati</taxon>
        <taxon>Pseudomonadota</taxon>
        <taxon>Gammaproteobacteria</taxon>
        <taxon>Enterobacterales</taxon>
        <taxon>Enterobacteriaceae</taxon>
        <taxon>Escherichia</taxon>
    </lineage>
</organism>
<dbReference type="EMBL" id="AE005174">
    <property type="protein sequence ID" value="AAG59009.1"/>
    <property type="molecule type" value="Genomic_DNA"/>
</dbReference>
<dbReference type="EMBL" id="BA000007">
    <property type="protein sequence ID" value="BAB38169.1"/>
    <property type="molecule type" value="Genomic_DNA"/>
</dbReference>
<dbReference type="PIR" id="B91222">
    <property type="entry name" value="B91222"/>
</dbReference>
<dbReference type="PIR" id="E86068">
    <property type="entry name" value="E86068"/>
</dbReference>
<dbReference type="RefSeq" id="NP_312773.1">
    <property type="nucleotide sequence ID" value="NC_002695.1"/>
</dbReference>
<dbReference type="RefSeq" id="WP_000947159.1">
    <property type="nucleotide sequence ID" value="NZ_VOAI01000017.1"/>
</dbReference>
<dbReference type="SMR" id="P0ABI6"/>
<dbReference type="GeneID" id="915181"/>
<dbReference type="GeneID" id="93778125"/>
<dbReference type="KEGG" id="ece:Z5333"/>
<dbReference type="KEGG" id="ecs:ECs_4746"/>
<dbReference type="PATRIC" id="fig|386585.9.peg.4954"/>
<dbReference type="eggNOG" id="COG0598">
    <property type="taxonomic scope" value="Bacteria"/>
</dbReference>
<dbReference type="HOGENOM" id="CLU_007127_5_0_6"/>
<dbReference type="OMA" id="RQNDDMR"/>
<dbReference type="Proteomes" id="UP000000558">
    <property type="component" value="Chromosome"/>
</dbReference>
<dbReference type="Proteomes" id="UP000002519">
    <property type="component" value="Chromosome"/>
</dbReference>
<dbReference type="GO" id="GO:0005886">
    <property type="term" value="C:plasma membrane"/>
    <property type="evidence" value="ECO:0007669"/>
    <property type="project" value="UniProtKB-SubCell"/>
</dbReference>
<dbReference type="GO" id="GO:0015087">
    <property type="term" value="F:cobalt ion transmembrane transporter activity"/>
    <property type="evidence" value="ECO:0007669"/>
    <property type="project" value="InterPro"/>
</dbReference>
<dbReference type="GO" id="GO:0015095">
    <property type="term" value="F:magnesium ion transmembrane transporter activity"/>
    <property type="evidence" value="ECO:0007669"/>
    <property type="project" value="InterPro"/>
</dbReference>
<dbReference type="GO" id="GO:0015099">
    <property type="term" value="F:nickel cation transmembrane transporter activity"/>
    <property type="evidence" value="ECO:0007669"/>
    <property type="project" value="TreeGrafter"/>
</dbReference>
<dbReference type="CDD" id="cd12835">
    <property type="entry name" value="EcCorA-like_1"/>
    <property type="match status" value="1"/>
</dbReference>
<dbReference type="FunFam" id="1.20.58.340:FF:000001">
    <property type="entry name" value="Magnesium transport protein CorA"/>
    <property type="match status" value="1"/>
</dbReference>
<dbReference type="Gene3D" id="1.20.58.340">
    <property type="entry name" value="Magnesium transport protein CorA, transmembrane region"/>
    <property type="match status" value="1"/>
</dbReference>
<dbReference type="InterPro" id="IPR045861">
    <property type="entry name" value="CorA_cytoplasmic_dom"/>
</dbReference>
<dbReference type="InterPro" id="IPR050829">
    <property type="entry name" value="CorA_MIT"/>
</dbReference>
<dbReference type="InterPro" id="IPR045863">
    <property type="entry name" value="CorA_TM1_TM2"/>
</dbReference>
<dbReference type="InterPro" id="IPR004488">
    <property type="entry name" value="Mg/Co-transport_prot_CorA"/>
</dbReference>
<dbReference type="InterPro" id="IPR002523">
    <property type="entry name" value="MgTranspt_CorA/ZnTranspt_ZntB"/>
</dbReference>
<dbReference type="NCBIfam" id="TIGR00383">
    <property type="entry name" value="corA"/>
    <property type="match status" value="1"/>
</dbReference>
<dbReference type="PANTHER" id="PTHR47685">
    <property type="entry name" value="MAGNESIUM TRANSPORT PROTEIN CORA"/>
    <property type="match status" value="1"/>
</dbReference>
<dbReference type="PANTHER" id="PTHR47685:SF1">
    <property type="entry name" value="MAGNESIUM TRANSPORT PROTEIN CORA"/>
    <property type="match status" value="1"/>
</dbReference>
<dbReference type="Pfam" id="PF01544">
    <property type="entry name" value="CorA"/>
    <property type="match status" value="1"/>
</dbReference>
<dbReference type="SUPFAM" id="SSF143865">
    <property type="entry name" value="CorA soluble domain-like"/>
    <property type="match status" value="1"/>
</dbReference>
<dbReference type="SUPFAM" id="SSF144083">
    <property type="entry name" value="Magnesium transport protein CorA, transmembrane region"/>
    <property type="match status" value="1"/>
</dbReference>
<sequence>MLSAFQLENNRLTRLEVEESQPLVNAVWIDLVEPDDDERLRVQSELGQSLATRPELEDIEASARFFEDDDGLHIHSFFFFEDAEDHAGNSTVAFTIRDGRLFTLRERELPAFRLYRMRARSQSMVDGNAYELLLDLFETKIEQLADEIENIYSDLEQLSRVIMEGHQGDEYDEALSTLAELEDIGWKVRLCLMDTQRALNFLVRKARLPGGQLEQAREILRDIESLLPHNESLFQKVNFLMQAAMGFINIEQNRIIKIFSVVSVVFLPPTLVASSYGMNFEFMPELKWSFGYPGAIIFMILAGLAPYLYFKRKNWL</sequence>
<proteinExistence type="inferred from homology"/>
<comment type="function">
    <text evidence="1 2">Mediates influx of magnesium ions (By similarity). Alternates between open and closed states. Activated by low cytoplasmic Mg(2+) levels. Inactive when cytoplasmic Mg(2+) levels are high (By similarity).</text>
</comment>
<comment type="catalytic activity">
    <reaction evidence="1">
        <text>Mg(2+)(in) = Mg(2+)(out)</text>
        <dbReference type="Rhea" id="RHEA:29827"/>
        <dbReference type="ChEBI" id="CHEBI:18420"/>
    </reaction>
</comment>
<comment type="subunit">
    <text evidence="2">Homopentamer. In the absence of Mg(2+), interactions between subunits are weakened, and dimers, trimers and tetramers can be observed in vitro (By similarity).</text>
</comment>
<comment type="subcellular location">
    <subcellularLocation>
        <location evidence="1">Cell inner membrane</location>
        <topology evidence="2">Multi-pass membrane protein</topology>
    </subcellularLocation>
</comment>
<comment type="domain">
    <text evidence="2">The central ion permeation pathway is formed by the first transmembrane domain from each of the five subunits. Mg(2+) binding strengthens interactions between subunits and leads to the formation of a symmetrical homopentamer surrounding a closed ion permeation pathway. Low Mg(2+) concentrations trigger both a conformation change within each subunit and a loosening of the interactions between subunits. This results in an open ion conduction pathway. In addition, this results in a less symmetrical shape of the whole complex.</text>
</comment>
<comment type="similarity">
    <text evidence="4">Belongs to the CorA metal ion transporter (MIT) (TC 1.A.35) family.</text>
</comment>
<gene>
    <name type="primary">corA</name>
    <name type="ordered locus">Z5333</name>
    <name type="ordered locus">ECs4746</name>
</gene>
<keyword id="KW-0997">Cell inner membrane</keyword>
<keyword id="KW-1003">Cell membrane</keyword>
<keyword id="KW-0406">Ion transport</keyword>
<keyword id="KW-0460">Magnesium</keyword>
<keyword id="KW-0472">Membrane</keyword>
<keyword id="KW-1185">Reference proteome</keyword>
<keyword id="KW-0812">Transmembrane</keyword>
<keyword id="KW-1133">Transmembrane helix</keyword>
<keyword id="KW-0813">Transport</keyword>
<feature type="chain" id="PRO_0000201528" description="Magnesium transport protein CorA">
    <location>
        <begin position="1"/>
        <end position="316"/>
    </location>
</feature>
<feature type="topological domain" description="Cytoplasmic" evidence="3">
    <location>
        <begin position="1"/>
        <end position="254"/>
    </location>
</feature>
<feature type="transmembrane region" description="Helical" evidence="3">
    <location>
        <begin position="255"/>
        <end position="273"/>
    </location>
</feature>
<feature type="topological domain" description="Periplasmic" evidence="3">
    <location>
        <begin position="274"/>
        <end position="287"/>
    </location>
</feature>
<feature type="transmembrane region" description="Helical" evidence="3">
    <location>
        <begin position="288"/>
        <end position="310"/>
    </location>
</feature>
<feature type="topological domain" description="Cytoplasmic" evidence="3">
    <location>
        <begin position="311"/>
        <end position="316"/>
    </location>
</feature>
<feature type="short sequence motif" description="Probable selectivity filter" evidence="2">
    <location>
        <begin position="277"/>
        <end position="279"/>
    </location>
</feature>
<feature type="site" description="Essential for ion permeation" evidence="2">
    <location>
        <position position="253"/>
    </location>
</feature>
<name>CORA_ECO57</name>
<reference key="1">
    <citation type="journal article" date="2001" name="Nature">
        <title>Genome sequence of enterohaemorrhagic Escherichia coli O157:H7.</title>
        <authorList>
            <person name="Perna N.T."/>
            <person name="Plunkett G. III"/>
            <person name="Burland V."/>
            <person name="Mau B."/>
            <person name="Glasner J.D."/>
            <person name="Rose D.J."/>
            <person name="Mayhew G.F."/>
            <person name="Evans P.S."/>
            <person name="Gregor J."/>
            <person name="Kirkpatrick H.A."/>
            <person name="Posfai G."/>
            <person name="Hackett J."/>
            <person name="Klink S."/>
            <person name="Boutin A."/>
            <person name="Shao Y."/>
            <person name="Miller L."/>
            <person name="Grotbeck E.J."/>
            <person name="Davis N.W."/>
            <person name="Lim A."/>
            <person name="Dimalanta E.T."/>
            <person name="Potamousis K."/>
            <person name="Apodaca J."/>
            <person name="Anantharaman T.S."/>
            <person name="Lin J."/>
            <person name="Yen G."/>
            <person name="Schwartz D.C."/>
            <person name="Welch R.A."/>
            <person name="Blattner F.R."/>
        </authorList>
    </citation>
    <scope>NUCLEOTIDE SEQUENCE [LARGE SCALE GENOMIC DNA]</scope>
    <source>
        <strain>O157:H7 / EDL933 / ATCC 700927 / EHEC</strain>
    </source>
</reference>
<reference key="2">
    <citation type="journal article" date="2001" name="DNA Res.">
        <title>Complete genome sequence of enterohemorrhagic Escherichia coli O157:H7 and genomic comparison with a laboratory strain K-12.</title>
        <authorList>
            <person name="Hayashi T."/>
            <person name="Makino K."/>
            <person name="Ohnishi M."/>
            <person name="Kurokawa K."/>
            <person name="Ishii K."/>
            <person name="Yokoyama K."/>
            <person name="Han C.-G."/>
            <person name="Ohtsubo E."/>
            <person name="Nakayama K."/>
            <person name="Murata T."/>
            <person name="Tanaka M."/>
            <person name="Tobe T."/>
            <person name="Iida T."/>
            <person name="Takami H."/>
            <person name="Honda T."/>
            <person name="Sasakawa C."/>
            <person name="Ogasawara N."/>
            <person name="Yasunaga T."/>
            <person name="Kuhara S."/>
            <person name="Shiba T."/>
            <person name="Hattori M."/>
            <person name="Shinagawa H."/>
        </authorList>
    </citation>
    <scope>NUCLEOTIDE SEQUENCE [LARGE SCALE GENOMIC DNA]</scope>
    <source>
        <strain>O157:H7 / Sakai / RIMD 0509952 / EHEC</strain>
    </source>
</reference>
<evidence type="ECO:0000250" key="1">
    <source>
        <dbReference type="UniProtKB" id="P0ABI4"/>
    </source>
</evidence>
<evidence type="ECO:0000250" key="2">
    <source>
        <dbReference type="UniProtKB" id="Q9WZ31"/>
    </source>
</evidence>
<evidence type="ECO:0000255" key="3"/>
<evidence type="ECO:0000305" key="4"/>